<gene>
    <name type="ordered locus">At1g25530</name>
    <name type="ORF">F2J7.5</name>
</gene>
<feature type="chain" id="PRO_0000387976" description="Lysine histidine transporter-like 6">
    <location>
        <begin position="1"/>
        <end position="440"/>
    </location>
</feature>
<feature type="topological domain" description="Cytoplasmic" evidence="2">
    <location>
        <begin position="1"/>
        <end position="31"/>
    </location>
</feature>
<feature type="transmembrane region" description="Helical" evidence="2">
    <location>
        <begin position="32"/>
        <end position="51"/>
    </location>
</feature>
<feature type="topological domain" description="Extracellular" evidence="2">
    <location>
        <begin position="52"/>
        <end position="61"/>
    </location>
</feature>
<feature type="transmembrane region" description="Helical" evidence="2">
    <location>
        <begin position="62"/>
        <end position="82"/>
    </location>
</feature>
<feature type="topological domain" description="Cytoplasmic" evidence="2">
    <location>
        <begin position="83"/>
        <end position="109"/>
    </location>
</feature>
<feature type="transmembrane region" description="Helical" evidence="2">
    <location>
        <begin position="110"/>
        <end position="130"/>
    </location>
</feature>
<feature type="topological domain" description="Extracellular" evidence="2">
    <location>
        <begin position="131"/>
        <end position="152"/>
    </location>
</feature>
<feature type="transmembrane region" description="Helical" evidence="2">
    <location>
        <begin position="153"/>
        <end position="173"/>
    </location>
</feature>
<feature type="topological domain" description="Cytoplasmic" evidence="2">
    <location>
        <position position="174"/>
    </location>
</feature>
<feature type="transmembrane region" description="Helical" evidence="2">
    <location>
        <begin position="175"/>
        <end position="195"/>
    </location>
</feature>
<feature type="topological domain" description="Extracellular" evidence="2">
    <location>
        <begin position="196"/>
        <end position="221"/>
    </location>
</feature>
<feature type="transmembrane region" description="Helical" evidence="2">
    <location>
        <begin position="222"/>
        <end position="242"/>
    </location>
</feature>
<feature type="topological domain" description="Cytoplasmic" evidence="2">
    <location>
        <begin position="243"/>
        <end position="261"/>
    </location>
</feature>
<feature type="transmembrane region" description="Helical" evidence="2">
    <location>
        <begin position="262"/>
        <end position="282"/>
    </location>
</feature>
<feature type="topological domain" description="Extracellular" evidence="2">
    <location>
        <begin position="283"/>
        <end position="300"/>
    </location>
</feature>
<feature type="transmembrane region" description="Helical" evidence="2">
    <location>
        <begin position="301"/>
        <end position="321"/>
    </location>
</feature>
<feature type="topological domain" description="Cytoplasmic" evidence="2">
    <location>
        <begin position="322"/>
        <end position="353"/>
    </location>
</feature>
<feature type="transmembrane region" description="Helical" evidence="2">
    <location>
        <begin position="354"/>
        <end position="374"/>
    </location>
</feature>
<feature type="transmembrane region" description="Helical" evidence="2">
    <location>
        <begin position="375"/>
        <end position="395"/>
    </location>
</feature>
<feature type="topological domain" description="Cytoplasmic" evidence="2">
    <location>
        <begin position="396"/>
        <end position="399"/>
    </location>
</feature>
<feature type="transmembrane region" description="Helical" evidence="2">
    <location>
        <begin position="400"/>
        <end position="420"/>
    </location>
</feature>
<feature type="topological domain" description="Extracellular" evidence="2">
    <location>
        <begin position="421"/>
        <end position="440"/>
    </location>
</feature>
<feature type="region of interest" description="Disordered" evidence="3">
    <location>
        <begin position="1"/>
        <end position="25"/>
    </location>
</feature>
<feature type="compositionally biased region" description="Polar residues" evidence="3">
    <location>
        <begin position="1"/>
        <end position="10"/>
    </location>
</feature>
<feature type="compositionally biased region" description="Basic and acidic residues" evidence="3">
    <location>
        <begin position="11"/>
        <end position="25"/>
    </location>
</feature>
<accession>Q9C6M2</accession>
<name>LHTL6_ARATH</name>
<reference key="1">
    <citation type="journal article" date="2000" name="Nature">
        <title>Sequence and analysis of chromosome 1 of the plant Arabidopsis thaliana.</title>
        <authorList>
            <person name="Theologis A."/>
            <person name="Ecker J.R."/>
            <person name="Palm C.J."/>
            <person name="Federspiel N.A."/>
            <person name="Kaul S."/>
            <person name="White O."/>
            <person name="Alonso J."/>
            <person name="Altafi H."/>
            <person name="Araujo R."/>
            <person name="Bowman C.L."/>
            <person name="Brooks S.Y."/>
            <person name="Buehler E."/>
            <person name="Chan A."/>
            <person name="Chao Q."/>
            <person name="Chen H."/>
            <person name="Cheuk R.F."/>
            <person name="Chin C.W."/>
            <person name="Chung M.K."/>
            <person name="Conn L."/>
            <person name="Conway A.B."/>
            <person name="Conway A.R."/>
            <person name="Creasy T.H."/>
            <person name="Dewar K."/>
            <person name="Dunn P."/>
            <person name="Etgu P."/>
            <person name="Feldblyum T.V."/>
            <person name="Feng J.-D."/>
            <person name="Fong B."/>
            <person name="Fujii C.Y."/>
            <person name="Gill J.E."/>
            <person name="Goldsmith A.D."/>
            <person name="Haas B."/>
            <person name="Hansen N.F."/>
            <person name="Hughes B."/>
            <person name="Huizar L."/>
            <person name="Hunter J.L."/>
            <person name="Jenkins J."/>
            <person name="Johnson-Hopson C."/>
            <person name="Khan S."/>
            <person name="Khaykin E."/>
            <person name="Kim C.J."/>
            <person name="Koo H.L."/>
            <person name="Kremenetskaia I."/>
            <person name="Kurtz D.B."/>
            <person name="Kwan A."/>
            <person name="Lam B."/>
            <person name="Langin-Hooper S."/>
            <person name="Lee A."/>
            <person name="Lee J.M."/>
            <person name="Lenz C.A."/>
            <person name="Li J.H."/>
            <person name="Li Y.-P."/>
            <person name="Lin X."/>
            <person name="Liu S.X."/>
            <person name="Liu Z.A."/>
            <person name="Luros J.S."/>
            <person name="Maiti R."/>
            <person name="Marziali A."/>
            <person name="Militscher J."/>
            <person name="Miranda M."/>
            <person name="Nguyen M."/>
            <person name="Nierman W.C."/>
            <person name="Osborne B.I."/>
            <person name="Pai G."/>
            <person name="Peterson J."/>
            <person name="Pham P.K."/>
            <person name="Rizzo M."/>
            <person name="Rooney T."/>
            <person name="Rowley D."/>
            <person name="Sakano H."/>
            <person name="Salzberg S.L."/>
            <person name="Schwartz J.R."/>
            <person name="Shinn P."/>
            <person name="Southwick A.M."/>
            <person name="Sun H."/>
            <person name="Tallon L.J."/>
            <person name="Tambunga G."/>
            <person name="Toriumi M.J."/>
            <person name="Town C.D."/>
            <person name="Utterback T."/>
            <person name="Van Aken S."/>
            <person name="Vaysberg M."/>
            <person name="Vysotskaia V.S."/>
            <person name="Walker M."/>
            <person name="Wu D."/>
            <person name="Yu G."/>
            <person name="Fraser C.M."/>
            <person name="Venter J.C."/>
            <person name="Davis R.W."/>
        </authorList>
    </citation>
    <scope>NUCLEOTIDE SEQUENCE [LARGE SCALE GENOMIC DNA]</scope>
    <source>
        <strain>cv. Columbia</strain>
    </source>
</reference>
<reference key="2">
    <citation type="journal article" date="2017" name="Plant J.">
        <title>Araport11: a complete reannotation of the Arabidopsis thaliana reference genome.</title>
        <authorList>
            <person name="Cheng C.Y."/>
            <person name="Krishnakumar V."/>
            <person name="Chan A.P."/>
            <person name="Thibaud-Nissen F."/>
            <person name="Schobel S."/>
            <person name="Town C.D."/>
        </authorList>
    </citation>
    <scope>GENOME REANNOTATION</scope>
    <source>
        <strain>cv. Columbia</strain>
    </source>
</reference>
<reference key="3">
    <citation type="submission" date="2006-07" db="EMBL/GenBank/DDBJ databases">
        <title>Large-scale analysis of RIKEN Arabidopsis full-length (RAFL) cDNAs.</title>
        <authorList>
            <person name="Totoki Y."/>
            <person name="Seki M."/>
            <person name="Ishida J."/>
            <person name="Nakajima M."/>
            <person name="Enju A."/>
            <person name="Kamiya A."/>
            <person name="Narusaka M."/>
            <person name="Shin-i T."/>
            <person name="Nakagawa M."/>
            <person name="Sakamoto N."/>
            <person name="Oishi K."/>
            <person name="Kohara Y."/>
            <person name="Kobayashi M."/>
            <person name="Toyoda A."/>
            <person name="Sakaki Y."/>
            <person name="Sakurai T."/>
            <person name="Iida K."/>
            <person name="Akiyama K."/>
            <person name="Satou M."/>
            <person name="Toyoda T."/>
            <person name="Konagaya A."/>
            <person name="Carninci P."/>
            <person name="Kawai J."/>
            <person name="Hayashizaki Y."/>
            <person name="Shinozaki K."/>
        </authorList>
    </citation>
    <scope>NUCLEOTIDE SEQUENCE [LARGE SCALE MRNA]</scope>
    <source>
        <strain>cv. Columbia</strain>
    </source>
</reference>
<reference key="4">
    <citation type="submission" date="2005-05" db="EMBL/GenBank/DDBJ databases">
        <title>Arabidopsis ORF clones.</title>
        <authorList>
            <person name="Kim C.J."/>
            <person name="Chen H."/>
            <person name="Cheuk R.F."/>
            <person name="Shinn P."/>
            <person name="Ecker J.R."/>
        </authorList>
    </citation>
    <scope>NUCLEOTIDE SEQUENCE [LARGE SCALE MRNA]</scope>
</reference>
<reference key="5">
    <citation type="journal article" date="2004" name="Plant J.">
        <title>Selective expression of a novel high-affinity transport system for acidic and neutral amino acids in the tapetum cells of Arabidopsis flowers.</title>
        <authorList>
            <person name="Lee Y.-H."/>
            <person name="Tegeder M."/>
        </authorList>
    </citation>
    <scope>GENE FAMILY</scope>
    <source>
        <strain>cv. C24</strain>
    </source>
</reference>
<sequence length="440" mass="48816">MVSSSPVSPSKETDRKSGEKWTAEDPSRPAKWWYSTFHTVTAMIGAGVLSLPYAMAYLGWGPGTFVLAMTWGLTLNTMWQMVQLHECVPGTRFDRYIDLGRYAFGPKLGPWIVLPQQLIVQVGCNIVYMVTGGKCLKQFVEITCSTCTPVRQSYWILGFGGVHFILSQLPNFNSVAGVSLAAAVMSLCYSTIAWGGSIAHGRVPDVSYDYKATNPGDFTFRVFNALGQISFAFAGHAVALEIQATMPSTPERPSKVPMWQGVIGAYVVNAVCYFPVALICYWAFGQDVDDNVLMNLQRPAWLIAAANLMVVVHVIGSYQVFAMPVFDLLERMMVNKFGFKHGVVLRFFTRTIYVAFTLFIGVSFPFFGDLLGFFGGFGFAPTSFFLPSIMWLIIKKPRRFSVTWFVNWISIIVGVFIMLASTIGGLRNIIADSSTYSFYA</sequence>
<organism>
    <name type="scientific">Arabidopsis thaliana</name>
    <name type="common">Mouse-ear cress</name>
    <dbReference type="NCBI Taxonomy" id="3702"/>
    <lineage>
        <taxon>Eukaryota</taxon>
        <taxon>Viridiplantae</taxon>
        <taxon>Streptophyta</taxon>
        <taxon>Embryophyta</taxon>
        <taxon>Tracheophyta</taxon>
        <taxon>Spermatophyta</taxon>
        <taxon>Magnoliopsida</taxon>
        <taxon>eudicotyledons</taxon>
        <taxon>Gunneridae</taxon>
        <taxon>Pentapetalae</taxon>
        <taxon>rosids</taxon>
        <taxon>malvids</taxon>
        <taxon>Brassicales</taxon>
        <taxon>Brassicaceae</taxon>
        <taxon>Camelineae</taxon>
        <taxon>Arabidopsis</taxon>
    </lineage>
</organism>
<dbReference type="EMBL" id="AC079281">
    <property type="protein sequence ID" value="AAG50812.1"/>
    <property type="molecule type" value="Genomic_DNA"/>
</dbReference>
<dbReference type="EMBL" id="CP002684">
    <property type="protein sequence ID" value="AEE30638.1"/>
    <property type="molecule type" value="Genomic_DNA"/>
</dbReference>
<dbReference type="EMBL" id="AK226595">
    <property type="protein sequence ID" value="BAE98710.1"/>
    <property type="molecule type" value="mRNA"/>
</dbReference>
<dbReference type="EMBL" id="BT022015">
    <property type="protein sequence ID" value="AAY25427.1"/>
    <property type="molecule type" value="mRNA"/>
</dbReference>
<dbReference type="PIR" id="F86385">
    <property type="entry name" value="F86385"/>
</dbReference>
<dbReference type="RefSeq" id="NP_173924.1">
    <property type="nucleotide sequence ID" value="NM_102364.4"/>
</dbReference>
<dbReference type="SMR" id="Q9C6M2"/>
<dbReference type="FunCoup" id="Q9C6M2">
    <property type="interactions" value="2"/>
</dbReference>
<dbReference type="STRING" id="3702.Q9C6M2"/>
<dbReference type="iPTMnet" id="Q9C6M2"/>
<dbReference type="PaxDb" id="3702-AT1G25530.1"/>
<dbReference type="ProteomicsDB" id="238379"/>
<dbReference type="EnsemblPlants" id="AT1G25530.1">
    <property type="protein sequence ID" value="AT1G25530.1"/>
    <property type="gene ID" value="AT1G25530"/>
</dbReference>
<dbReference type="GeneID" id="839139"/>
<dbReference type="Gramene" id="AT1G25530.1">
    <property type="protein sequence ID" value="AT1G25530.1"/>
    <property type="gene ID" value="AT1G25530"/>
</dbReference>
<dbReference type="KEGG" id="ath:AT1G25530"/>
<dbReference type="Araport" id="AT1G25530"/>
<dbReference type="TAIR" id="AT1G25530"/>
<dbReference type="eggNOG" id="KOG1303">
    <property type="taxonomic scope" value="Eukaryota"/>
</dbReference>
<dbReference type="HOGENOM" id="CLU_031160_0_0_1"/>
<dbReference type="InParanoid" id="Q9C6M2"/>
<dbReference type="OMA" id="PYINNCY"/>
<dbReference type="OrthoDB" id="40134at2759"/>
<dbReference type="PhylomeDB" id="Q9C6M2"/>
<dbReference type="PRO" id="PR:Q9C6M2"/>
<dbReference type="Proteomes" id="UP000006548">
    <property type="component" value="Chromosome 1"/>
</dbReference>
<dbReference type="ExpressionAtlas" id="Q9C6M2">
    <property type="expression patterns" value="baseline and differential"/>
</dbReference>
<dbReference type="GO" id="GO:0005886">
    <property type="term" value="C:plasma membrane"/>
    <property type="evidence" value="ECO:0007669"/>
    <property type="project" value="UniProtKB-SubCell"/>
</dbReference>
<dbReference type="GO" id="GO:0006865">
    <property type="term" value="P:amino acid transport"/>
    <property type="evidence" value="ECO:0007669"/>
    <property type="project" value="UniProtKB-KW"/>
</dbReference>
<dbReference type="FunFam" id="1.20.1740.10:FF:000033">
    <property type="entry name" value="Lysine histidine transporter 1"/>
    <property type="match status" value="1"/>
</dbReference>
<dbReference type="InterPro" id="IPR013057">
    <property type="entry name" value="AA_transpt_TM"/>
</dbReference>
<dbReference type="PANTHER" id="PTHR48017">
    <property type="entry name" value="OS05G0424000 PROTEIN-RELATED"/>
    <property type="match status" value="1"/>
</dbReference>
<dbReference type="Pfam" id="PF01490">
    <property type="entry name" value="Aa_trans"/>
    <property type="match status" value="1"/>
</dbReference>
<keyword id="KW-0029">Amino-acid transport</keyword>
<keyword id="KW-1003">Cell membrane</keyword>
<keyword id="KW-0472">Membrane</keyword>
<keyword id="KW-1185">Reference proteome</keyword>
<keyword id="KW-0812">Transmembrane</keyword>
<keyword id="KW-1133">Transmembrane helix</keyword>
<keyword id="KW-0813">Transport</keyword>
<proteinExistence type="evidence at transcript level"/>
<evidence type="ECO:0000250" key="1"/>
<evidence type="ECO:0000255" key="2"/>
<evidence type="ECO:0000256" key="3">
    <source>
        <dbReference type="SAM" id="MobiDB-lite"/>
    </source>
</evidence>
<evidence type="ECO:0000305" key="4"/>
<protein>
    <recommendedName>
        <fullName>Lysine histidine transporter-like 6</fullName>
    </recommendedName>
</protein>
<comment type="function">
    <text evidence="1">Amino acid transporter.</text>
</comment>
<comment type="subcellular location">
    <subcellularLocation>
        <location evidence="4">Cell membrane</location>
        <topology evidence="4">Multi-pass membrane protein</topology>
    </subcellularLocation>
</comment>
<comment type="similarity">
    <text evidence="4">Belongs to the amino acid/polyamine transporter 2 family. Amino acid/auxin permease (AAAP) (TC 2.A.18.2) subfamily.</text>
</comment>